<protein>
    <recommendedName>
        <fullName evidence="1">tRNA(Met) cytidine acetate ligase</fullName>
        <ecNumber evidence="1">6.3.4.-</ecNumber>
    </recommendedName>
</protein>
<gene>
    <name evidence="1" type="primary">tmcAL</name>
    <name type="ordered locus">SAS1060</name>
</gene>
<feature type="chain" id="PRO_0000147182" description="tRNA(Met) cytidine acetate ligase">
    <location>
        <begin position="1"/>
        <end position="379"/>
    </location>
</feature>
<feature type="binding site" evidence="1">
    <location>
        <begin position="7"/>
        <end position="20"/>
    </location>
    <ligand>
        <name>ATP</name>
        <dbReference type="ChEBI" id="CHEBI:30616"/>
    </ligand>
</feature>
<feature type="binding site" evidence="1">
    <location>
        <position position="100"/>
    </location>
    <ligand>
        <name>ATP</name>
        <dbReference type="ChEBI" id="CHEBI:30616"/>
    </ligand>
</feature>
<feature type="binding site" evidence="1">
    <location>
        <position position="153"/>
    </location>
    <ligand>
        <name>ATP</name>
        <dbReference type="ChEBI" id="CHEBI:30616"/>
    </ligand>
</feature>
<feature type="binding site" evidence="1">
    <location>
        <position position="178"/>
    </location>
    <ligand>
        <name>ATP</name>
        <dbReference type="ChEBI" id="CHEBI:30616"/>
    </ligand>
</feature>
<organism>
    <name type="scientific">Staphylococcus aureus (strain MSSA476)</name>
    <dbReference type="NCBI Taxonomy" id="282459"/>
    <lineage>
        <taxon>Bacteria</taxon>
        <taxon>Bacillati</taxon>
        <taxon>Bacillota</taxon>
        <taxon>Bacilli</taxon>
        <taxon>Bacillales</taxon>
        <taxon>Staphylococcaceae</taxon>
        <taxon>Staphylococcus</taxon>
    </lineage>
</organism>
<keyword id="KW-0067">ATP-binding</keyword>
<keyword id="KW-0963">Cytoplasm</keyword>
<keyword id="KW-0436">Ligase</keyword>
<keyword id="KW-0547">Nucleotide-binding</keyword>
<keyword id="KW-0694">RNA-binding</keyword>
<keyword id="KW-0819">tRNA processing</keyword>
<keyword id="KW-0820">tRNA-binding</keyword>
<proteinExistence type="inferred from homology"/>
<name>TMCAL_STAAS</name>
<reference key="1">
    <citation type="journal article" date="2004" name="Proc. Natl. Acad. Sci. U.S.A.">
        <title>Complete genomes of two clinical Staphylococcus aureus strains: evidence for the rapid evolution of virulence and drug resistance.</title>
        <authorList>
            <person name="Holden M.T.G."/>
            <person name="Feil E.J."/>
            <person name="Lindsay J.A."/>
            <person name="Peacock S.J."/>
            <person name="Day N.P.J."/>
            <person name="Enright M.C."/>
            <person name="Foster T.J."/>
            <person name="Moore C.E."/>
            <person name="Hurst L."/>
            <person name="Atkin R."/>
            <person name="Barron A."/>
            <person name="Bason N."/>
            <person name="Bentley S.D."/>
            <person name="Chillingworth C."/>
            <person name="Chillingworth T."/>
            <person name="Churcher C."/>
            <person name="Clark L."/>
            <person name="Corton C."/>
            <person name="Cronin A."/>
            <person name="Doggett J."/>
            <person name="Dowd L."/>
            <person name="Feltwell T."/>
            <person name="Hance Z."/>
            <person name="Harris B."/>
            <person name="Hauser H."/>
            <person name="Holroyd S."/>
            <person name="Jagels K."/>
            <person name="James K.D."/>
            <person name="Lennard N."/>
            <person name="Line A."/>
            <person name="Mayes R."/>
            <person name="Moule S."/>
            <person name="Mungall K."/>
            <person name="Ormond D."/>
            <person name="Quail M.A."/>
            <person name="Rabbinowitsch E."/>
            <person name="Rutherford K.M."/>
            <person name="Sanders M."/>
            <person name="Sharp S."/>
            <person name="Simmonds M."/>
            <person name="Stevens K."/>
            <person name="Whitehead S."/>
            <person name="Barrell B.G."/>
            <person name="Spratt B.G."/>
            <person name="Parkhill J."/>
        </authorList>
    </citation>
    <scope>NUCLEOTIDE SEQUENCE [LARGE SCALE GENOMIC DNA]</scope>
    <source>
        <strain>MSSA476</strain>
    </source>
</reference>
<comment type="function">
    <text evidence="1">Catalyzes the formation of N(4)-acetylcytidine (ac(4)C) at the wobble position of elongator tRNA(Met), using acetate and ATP as substrates. First activates an acetate ion to form acetyladenylate (Ac-AMP) and then transfers the acetyl group to tRNA to form ac(4)C34.</text>
</comment>
<comment type="catalytic activity">
    <reaction evidence="1">
        <text>cytidine(34) in elongator tRNA(Met) + acetate + ATP = N(4)-acetylcytidine(34) in elongator tRNA(Met) + AMP + diphosphate</text>
        <dbReference type="Rhea" id="RHEA:58144"/>
        <dbReference type="Rhea" id="RHEA-COMP:10693"/>
        <dbReference type="Rhea" id="RHEA-COMP:10694"/>
        <dbReference type="ChEBI" id="CHEBI:30089"/>
        <dbReference type="ChEBI" id="CHEBI:30616"/>
        <dbReference type="ChEBI" id="CHEBI:33019"/>
        <dbReference type="ChEBI" id="CHEBI:74900"/>
        <dbReference type="ChEBI" id="CHEBI:82748"/>
        <dbReference type="ChEBI" id="CHEBI:456215"/>
    </reaction>
</comment>
<comment type="subcellular location">
    <subcellularLocation>
        <location evidence="1">Cytoplasm</location>
    </subcellularLocation>
</comment>
<comment type="similarity">
    <text evidence="1">Belongs to the TmcAL family.</text>
</comment>
<dbReference type="EC" id="6.3.4.-" evidence="1"/>
<dbReference type="EMBL" id="BX571857">
    <property type="protein sequence ID" value="CAG42834.1"/>
    <property type="molecule type" value="Genomic_DNA"/>
</dbReference>
<dbReference type="RefSeq" id="WP_000843611.1">
    <property type="nucleotide sequence ID" value="NC_002953.3"/>
</dbReference>
<dbReference type="SMR" id="Q6GA89"/>
<dbReference type="KEGG" id="sas:SAS1060"/>
<dbReference type="HOGENOM" id="CLU_038915_0_2_9"/>
<dbReference type="GO" id="GO:0005737">
    <property type="term" value="C:cytoplasm"/>
    <property type="evidence" value="ECO:0007669"/>
    <property type="project" value="UniProtKB-SubCell"/>
</dbReference>
<dbReference type="GO" id="GO:0005524">
    <property type="term" value="F:ATP binding"/>
    <property type="evidence" value="ECO:0007669"/>
    <property type="project" value="UniProtKB-KW"/>
</dbReference>
<dbReference type="GO" id="GO:0016879">
    <property type="term" value="F:ligase activity, forming carbon-nitrogen bonds"/>
    <property type="evidence" value="ECO:0007669"/>
    <property type="project" value="UniProtKB-UniRule"/>
</dbReference>
<dbReference type="GO" id="GO:0000049">
    <property type="term" value="F:tRNA binding"/>
    <property type="evidence" value="ECO:0007669"/>
    <property type="project" value="UniProtKB-KW"/>
</dbReference>
<dbReference type="GO" id="GO:0006400">
    <property type="term" value="P:tRNA modification"/>
    <property type="evidence" value="ECO:0007669"/>
    <property type="project" value="UniProtKB-UniRule"/>
</dbReference>
<dbReference type="Gene3D" id="3.40.50.620">
    <property type="entry name" value="HUPs"/>
    <property type="match status" value="1"/>
</dbReference>
<dbReference type="HAMAP" id="MF_01539">
    <property type="entry name" value="TmcAL"/>
    <property type="match status" value="1"/>
</dbReference>
<dbReference type="InterPro" id="IPR014729">
    <property type="entry name" value="Rossmann-like_a/b/a_fold"/>
</dbReference>
<dbReference type="InterPro" id="IPR008513">
    <property type="entry name" value="tRNA(Met)_cyd_acetate_ligase"/>
</dbReference>
<dbReference type="NCBIfam" id="NF010191">
    <property type="entry name" value="PRK13670.1"/>
    <property type="match status" value="1"/>
</dbReference>
<dbReference type="PANTHER" id="PTHR37825">
    <property type="entry name" value="TRNA(MET) CYTIDINE ACETATE LIGASE"/>
    <property type="match status" value="1"/>
</dbReference>
<dbReference type="PANTHER" id="PTHR37825:SF1">
    <property type="entry name" value="TRNA(MET) CYTIDINE ACETATE LIGASE"/>
    <property type="match status" value="1"/>
</dbReference>
<dbReference type="Pfam" id="PF05636">
    <property type="entry name" value="HIGH_NTase1"/>
    <property type="match status" value="1"/>
</dbReference>
<dbReference type="SUPFAM" id="SSF52374">
    <property type="entry name" value="Nucleotidylyl transferase"/>
    <property type="match status" value="1"/>
</dbReference>
<accession>Q6GA89</accession>
<evidence type="ECO:0000255" key="1">
    <source>
        <dbReference type="HAMAP-Rule" id="MF_01539"/>
    </source>
</evidence>
<sequence length="379" mass="43240">MKSVGLITEYNPFHNGHQYHINQSKKLTNADVTIAIMSGNFVMRGEPAIYNKFTRAKMALSTADLVIELPATASLSSGDHFAELAVKVADYMSVDTIAFGSENNDIKTLKQLAHSINEIEQSESFSQKVKEGKSYPRIISELLEHHEALASPNNILGISYLKAIAKNAKNINAISIKRENAQHHDSLIQHHQFASGTSIRTSIISQDDHWHHVVPKDIQHLYVTPHITLNQIFPYLKYQIIAMTTDSLKNIYTVTEGFENRLKSNIYEATDFHHFVKLLKTKRYTYTHIQRLLMNVLLNIKPTDVTSNIHAVKVLAMNDRGRQYLKHLKTAFPERQYITNINKSNAHYFTNEIKATHIYNAISGQQQTDFNTPVIQQYR</sequence>